<proteinExistence type="inferred from homology"/>
<evidence type="ECO:0000255" key="1">
    <source>
        <dbReference type="HAMAP-Rule" id="MF_01313"/>
    </source>
</evidence>
<name>NORW_ENT38</name>
<protein>
    <recommendedName>
        <fullName evidence="1">Nitric oxide reductase FlRd-NAD(+) reductase</fullName>
        <ecNumber evidence="1">1.18.1.-</ecNumber>
    </recommendedName>
    <alternativeName>
        <fullName evidence="1">Flavorubredoxin reductase</fullName>
        <shortName evidence="1">FlRd-reductase</shortName>
        <shortName evidence="1">FlavoRb reductase</shortName>
    </alternativeName>
</protein>
<dbReference type="EC" id="1.18.1.-" evidence="1"/>
<dbReference type="EMBL" id="CP000653">
    <property type="protein sequence ID" value="ABP61847.1"/>
    <property type="molecule type" value="Genomic_DNA"/>
</dbReference>
<dbReference type="RefSeq" id="WP_015960176.1">
    <property type="nucleotide sequence ID" value="NC_009436.1"/>
</dbReference>
<dbReference type="SMR" id="A4WDR7"/>
<dbReference type="STRING" id="399742.Ent638_3183"/>
<dbReference type="KEGG" id="ent:Ent638_3183"/>
<dbReference type="eggNOG" id="COG0446">
    <property type="taxonomic scope" value="Bacteria"/>
</dbReference>
<dbReference type="HOGENOM" id="CLU_003291_4_4_6"/>
<dbReference type="OrthoDB" id="9808980at2"/>
<dbReference type="UniPathway" id="UPA00638"/>
<dbReference type="Proteomes" id="UP000000230">
    <property type="component" value="Chromosome"/>
</dbReference>
<dbReference type="GO" id="GO:0005737">
    <property type="term" value="C:cytoplasm"/>
    <property type="evidence" value="ECO:0007669"/>
    <property type="project" value="UniProtKB-SubCell"/>
</dbReference>
<dbReference type="GO" id="GO:0016731">
    <property type="term" value="F:oxidoreductase activity, acting on iron-sulfur proteins as donors, NAD or NADP as acceptor"/>
    <property type="evidence" value="ECO:0007669"/>
    <property type="project" value="UniProtKB-UniRule"/>
</dbReference>
<dbReference type="Gene3D" id="3.30.390.120">
    <property type="match status" value="1"/>
</dbReference>
<dbReference type="Gene3D" id="3.50.50.60">
    <property type="entry name" value="FAD/NAD(P)-binding domain"/>
    <property type="match status" value="2"/>
</dbReference>
<dbReference type="HAMAP" id="MF_01313">
    <property type="entry name" value="NorW"/>
    <property type="match status" value="1"/>
</dbReference>
<dbReference type="InterPro" id="IPR050260">
    <property type="entry name" value="FAD-bd_OxRdtase"/>
</dbReference>
<dbReference type="InterPro" id="IPR036188">
    <property type="entry name" value="FAD/NAD-bd_sf"/>
</dbReference>
<dbReference type="InterPro" id="IPR023753">
    <property type="entry name" value="FAD/NAD-binding_dom"/>
</dbReference>
<dbReference type="InterPro" id="IPR023961">
    <property type="entry name" value="NO_rdtase_NorW"/>
</dbReference>
<dbReference type="InterPro" id="IPR041364">
    <property type="entry name" value="Rbx-bd"/>
</dbReference>
<dbReference type="NCBIfam" id="NF003437">
    <property type="entry name" value="PRK04965.1"/>
    <property type="match status" value="1"/>
</dbReference>
<dbReference type="PANTHER" id="PTHR43429:SF3">
    <property type="entry name" value="NITRITE REDUCTASE [NAD(P)H]"/>
    <property type="match status" value="1"/>
</dbReference>
<dbReference type="PANTHER" id="PTHR43429">
    <property type="entry name" value="PYRIDINE NUCLEOTIDE-DISULFIDE OXIDOREDUCTASE DOMAIN-CONTAINING"/>
    <property type="match status" value="1"/>
</dbReference>
<dbReference type="Pfam" id="PF07992">
    <property type="entry name" value="Pyr_redox_2"/>
    <property type="match status" value="1"/>
</dbReference>
<dbReference type="Pfam" id="PF18113">
    <property type="entry name" value="Rbx_binding"/>
    <property type="match status" value="1"/>
</dbReference>
<dbReference type="PRINTS" id="PR00368">
    <property type="entry name" value="FADPNR"/>
</dbReference>
<dbReference type="PRINTS" id="PR00411">
    <property type="entry name" value="PNDRDTASEI"/>
</dbReference>
<dbReference type="SUPFAM" id="SSF51905">
    <property type="entry name" value="FAD/NAD(P)-binding domain"/>
    <property type="match status" value="1"/>
</dbReference>
<gene>
    <name evidence="1" type="primary">norW</name>
    <name evidence="1" type="synonym">flrR</name>
    <name type="ordered locus">Ent638_3183</name>
</gene>
<comment type="function">
    <text evidence="1">One of at least two accessory proteins for anaerobic nitric oxide (NO) reductase. Reduces the rubredoxin moiety of NO reductase.</text>
</comment>
<comment type="catalytic activity">
    <reaction evidence="1">
        <text>2 reduced [nitric oxide reductase rubredoxin domain] + NAD(+) + H(+) = 2 oxidized [nitric oxide reductase rubredoxin domain] + NADH</text>
        <dbReference type="Rhea" id="RHEA:42960"/>
        <dbReference type="Rhea" id="RHEA-COMP:10304"/>
        <dbReference type="Rhea" id="RHEA-COMP:10305"/>
        <dbReference type="ChEBI" id="CHEBI:15378"/>
        <dbReference type="ChEBI" id="CHEBI:29033"/>
        <dbReference type="ChEBI" id="CHEBI:29034"/>
        <dbReference type="ChEBI" id="CHEBI:57540"/>
        <dbReference type="ChEBI" id="CHEBI:57945"/>
    </reaction>
</comment>
<comment type="cofactor">
    <cofactor evidence="1">
        <name>FAD</name>
        <dbReference type="ChEBI" id="CHEBI:57692"/>
    </cofactor>
</comment>
<comment type="pathway">
    <text evidence="1">Nitrogen metabolism; nitric oxide reduction.</text>
</comment>
<comment type="subcellular location">
    <subcellularLocation>
        <location evidence="1">Cytoplasm</location>
    </subcellularLocation>
</comment>
<comment type="similarity">
    <text evidence="1">Belongs to the FAD-dependent oxidoreductase family.</text>
</comment>
<reference key="1">
    <citation type="journal article" date="2010" name="PLoS Genet.">
        <title>Genome sequence of the plant growth promoting endophytic bacterium Enterobacter sp. 638.</title>
        <authorList>
            <person name="Taghavi S."/>
            <person name="van der Lelie D."/>
            <person name="Hoffman A."/>
            <person name="Zhang Y.B."/>
            <person name="Walla M.D."/>
            <person name="Vangronsveld J."/>
            <person name="Newman L."/>
            <person name="Monchy S."/>
        </authorList>
    </citation>
    <scope>NUCLEOTIDE SEQUENCE [LARGE SCALE GENOMIC DNA]</scope>
    <source>
        <strain>638</strain>
    </source>
</reference>
<feature type="chain" id="PRO_0000341313" description="Nitric oxide reductase FlRd-NAD(+) reductase">
    <location>
        <begin position="1"/>
        <end position="377"/>
    </location>
</feature>
<keyword id="KW-0963">Cytoplasm</keyword>
<keyword id="KW-0274">FAD</keyword>
<keyword id="KW-0285">Flavoprotein</keyword>
<keyword id="KW-0520">NAD</keyword>
<keyword id="KW-0560">Oxidoreductase</keyword>
<sequence>MSHGIVIIGSGFAARQLVKNIRKQDANVPLTLIAADSMDEYNKPDLSHVISQSQRADDLTRQTAGEFAEQFHLRLFPYTRVTDIDAAAHCVKAKDKQWHYDKLVLATGASAFVPLIEGHELMLTLNSQQEYKACETRLRDAQRVMIVGGGLIGTELAMDFCRAGKSVTLVDHAARILSALMPAEVSSRLQHRLTDMGVHQLLKSQLQSLTKTDTGIRATLDRNRSVEIDVVVAATGLRPETALARRAGAETHLGVKVDSYLQTTQPDIYALGDCAEINGQVLPFLQPIQISAMYLAKNLLGTSTPLKLPTMLVKVKTPELPLHLAGETQRQDLNWQITLETQGMVARGMDNDGQLRAFVVSEDRMKEAFALLKSLPV</sequence>
<organism>
    <name type="scientific">Enterobacter sp. (strain 638)</name>
    <dbReference type="NCBI Taxonomy" id="399742"/>
    <lineage>
        <taxon>Bacteria</taxon>
        <taxon>Pseudomonadati</taxon>
        <taxon>Pseudomonadota</taxon>
        <taxon>Gammaproteobacteria</taxon>
        <taxon>Enterobacterales</taxon>
        <taxon>Enterobacteriaceae</taxon>
        <taxon>Enterobacter</taxon>
    </lineage>
</organism>
<accession>A4WDR7</accession>